<feature type="chain" id="PRO_1000117619" description="Aspartyl/glutamyl-tRNA(Asn/Gln) amidotransferase subunit B">
    <location>
        <begin position="1"/>
        <end position="495"/>
    </location>
</feature>
<accession>B7K293</accession>
<gene>
    <name evidence="1" type="primary">gatB</name>
    <name type="ordered locus">PCC8801_1161</name>
</gene>
<evidence type="ECO:0000255" key="1">
    <source>
        <dbReference type="HAMAP-Rule" id="MF_00121"/>
    </source>
</evidence>
<organism>
    <name type="scientific">Rippkaea orientalis (strain PCC 8801 / RF-1)</name>
    <name type="common">Cyanothece sp. (strain PCC 8801)</name>
    <dbReference type="NCBI Taxonomy" id="41431"/>
    <lineage>
        <taxon>Bacteria</taxon>
        <taxon>Bacillati</taxon>
        <taxon>Cyanobacteriota</taxon>
        <taxon>Cyanophyceae</taxon>
        <taxon>Oscillatoriophycideae</taxon>
        <taxon>Chroococcales</taxon>
        <taxon>Aphanothecaceae</taxon>
        <taxon>Rippkaea</taxon>
        <taxon>Rippkaea orientalis</taxon>
    </lineage>
</organism>
<name>GATB_RIPO1</name>
<reference key="1">
    <citation type="journal article" date="2011" name="MBio">
        <title>Novel metabolic attributes of the genus Cyanothece, comprising a group of unicellular nitrogen-fixing Cyanobacteria.</title>
        <authorList>
            <person name="Bandyopadhyay A."/>
            <person name="Elvitigala T."/>
            <person name="Welsh E."/>
            <person name="Stockel J."/>
            <person name="Liberton M."/>
            <person name="Min H."/>
            <person name="Sherman L.A."/>
            <person name="Pakrasi H.B."/>
        </authorList>
    </citation>
    <scope>NUCLEOTIDE SEQUENCE [LARGE SCALE GENOMIC DNA]</scope>
    <source>
        <strain>PCC 8801 / RF-1</strain>
    </source>
</reference>
<proteinExistence type="inferred from homology"/>
<comment type="function">
    <text evidence="1">Allows the formation of correctly charged Asn-tRNA(Asn) or Gln-tRNA(Gln) through the transamidation of misacylated Asp-tRNA(Asn) or Glu-tRNA(Gln) in organisms which lack either or both of asparaginyl-tRNA or glutaminyl-tRNA synthetases. The reaction takes place in the presence of glutamine and ATP through an activated phospho-Asp-tRNA(Asn) or phospho-Glu-tRNA(Gln).</text>
</comment>
<comment type="catalytic activity">
    <reaction evidence="1">
        <text>L-glutamyl-tRNA(Gln) + L-glutamine + ATP + H2O = L-glutaminyl-tRNA(Gln) + L-glutamate + ADP + phosphate + H(+)</text>
        <dbReference type="Rhea" id="RHEA:17521"/>
        <dbReference type="Rhea" id="RHEA-COMP:9681"/>
        <dbReference type="Rhea" id="RHEA-COMP:9684"/>
        <dbReference type="ChEBI" id="CHEBI:15377"/>
        <dbReference type="ChEBI" id="CHEBI:15378"/>
        <dbReference type="ChEBI" id="CHEBI:29985"/>
        <dbReference type="ChEBI" id="CHEBI:30616"/>
        <dbReference type="ChEBI" id="CHEBI:43474"/>
        <dbReference type="ChEBI" id="CHEBI:58359"/>
        <dbReference type="ChEBI" id="CHEBI:78520"/>
        <dbReference type="ChEBI" id="CHEBI:78521"/>
        <dbReference type="ChEBI" id="CHEBI:456216"/>
    </reaction>
</comment>
<comment type="catalytic activity">
    <reaction evidence="1">
        <text>L-aspartyl-tRNA(Asn) + L-glutamine + ATP + H2O = L-asparaginyl-tRNA(Asn) + L-glutamate + ADP + phosphate + 2 H(+)</text>
        <dbReference type="Rhea" id="RHEA:14513"/>
        <dbReference type="Rhea" id="RHEA-COMP:9674"/>
        <dbReference type="Rhea" id="RHEA-COMP:9677"/>
        <dbReference type="ChEBI" id="CHEBI:15377"/>
        <dbReference type="ChEBI" id="CHEBI:15378"/>
        <dbReference type="ChEBI" id="CHEBI:29985"/>
        <dbReference type="ChEBI" id="CHEBI:30616"/>
        <dbReference type="ChEBI" id="CHEBI:43474"/>
        <dbReference type="ChEBI" id="CHEBI:58359"/>
        <dbReference type="ChEBI" id="CHEBI:78515"/>
        <dbReference type="ChEBI" id="CHEBI:78516"/>
        <dbReference type="ChEBI" id="CHEBI:456216"/>
    </reaction>
</comment>
<comment type="subunit">
    <text evidence="1">Heterotrimer of A, B and C subunits.</text>
</comment>
<comment type="similarity">
    <text evidence="1">Belongs to the GatB/GatE family. GatB subfamily.</text>
</comment>
<keyword id="KW-0067">ATP-binding</keyword>
<keyword id="KW-0436">Ligase</keyword>
<keyword id="KW-0547">Nucleotide-binding</keyword>
<keyword id="KW-0648">Protein biosynthesis</keyword>
<keyword id="KW-1185">Reference proteome</keyword>
<sequence length="495" mass="55157">MTTATPAKTKYEAIIGLETHCQLNTNSKIFCACSTNFDSPPNTNICPICLGYPGVLPVLNEEVLASAVKLGLAINGKIASYSKFDRKQYFYADLPKNYQISQYDLPIVEHGFLEIELVDKKTKEVTRKTIGITRLHMEEDAGKLVHAGSDRLAGSTHSLVDFNRTGVPLLEIVSEPDLRSGQEAAEYAQELRRLVRYLGISDGNMQEGSLRCDVNISIRPVGQKEFGTKVEIKNMNSFSAIQKAIEYEIERQIEALENNEPIYQETRLWEEKTQCTVSMRKKEGSSDYRYFPEPDLPPLEVSPEQLEHWKHQLPELPAQKRSRYEAEFGLSAYDARVLTDDRDVANYYEAAVAAGADAKLVANWVTQDIAAYLNNNKLAIAEIVLTPQSLGELVQLIETGTISGKIAKEILPELLEKGGSPKELVAKKGMTQISDLGELEKIIDEIIAANPKELEKFRSGKTNLKGFFVGQVMKQTGGRADPKLTNQLVDQKLQG</sequence>
<protein>
    <recommendedName>
        <fullName evidence="1">Aspartyl/glutamyl-tRNA(Asn/Gln) amidotransferase subunit B</fullName>
        <shortName evidence="1">Asp/Glu-ADT subunit B</shortName>
        <ecNumber evidence="1">6.3.5.-</ecNumber>
    </recommendedName>
</protein>
<dbReference type="EC" id="6.3.5.-" evidence="1"/>
<dbReference type="EMBL" id="CP001287">
    <property type="protein sequence ID" value="ACK65229.1"/>
    <property type="molecule type" value="Genomic_DNA"/>
</dbReference>
<dbReference type="RefSeq" id="WP_012594503.1">
    <property type="nucleotide sequence ID" value="NC_011726.1"/>
</dbReference>
<dbReference type="SMR" id="B7K293"/>
<dbReference type="STRING" id="41431.PCC8801_1161"/>
<dbReference type="KEGG" id="cyp:PCC8801_1161"/>
<dbReference type="eggNOG" id="COG0064">
    <property type="taxonomic scope" value="Bacteria"/>
</dbReference>
<dbReference type="HOGENOM" id="CLU_019240_0_0_3"/>
<dbReference type="OrthoDB" id="9804078at2"/>
<dbReference type="Proteomes" id="UP000008204">
    <property type="component" value="Chromosome"/>
</dbReference>
<dbReference type="GO" id="GO:0050566">
    <property type="term" value="F:asparaginyl-tRNA synthase (glutamine-hydrolyzing) activity"/>
    <property type="evidence" value="ECO:0007669"/>
    <property type="project" value="RHEA"/>
</dbReference>
<dbReference type="GO" id="GO:0005524">
    <property type="term" value="F:ATP binding"/>
    <property type="evidence" value="ECO:0007669"/>
    <property type="project" value="UniProtKB-KW"/>
</dbReference>
<dbReference type="GO" id="GO:0050567">
    <property type="term" value="F:glutaminyl-tRNA synthase (glutamine-hydrolyzing) activity"/>
    <property type="evidence" value="ECO:0007669"/>
    <property type="project" value="UniProtKB-UniRule"/>
</dbReference>
<dbReference type="GO" id="GO:0070681">
    <property type="term" value="P:glutaminyl-tRNAGln biosynthesis via transamidation"/>
    <property type="evidence" value="ECO:0007669"/>
    <property type="project" value="TreeGrafter"/>
</dbReference>
<dbReference type="GO" id="GO:0006412">
    <property type="term" value="P:translation"/>
    <property type="evidence" value="ECO:0007669"/>
    <property type="project" value="UniProtKB-UniRule"/>
</dbReference>
<dbReference type="FunFam" id="1.10.10.410:FF:000001">
    <property type="entry name" value="Aspartyl/glutamyl-tRNA(Asn/Gln) amidotransferase subunit B"/>
    <property type="match status" value="1"/>
</dbReference>
<dbReference type="FunFam" id="1.10.150.380:FF:000001">
    <property type="entry name" value="Aspartyl/glutamyl-tRNA(Asn/Gln) amidotransferase subunit B"/>
    <property type="match status" value="1"/>
</dbReference>
<dbReference type="Gene3D" id="1.10.10.410">
    <property type="match status" value="1"/>
</dbReference>
<dbReference type="Gene3D" id="1.10.150.380">
    <property type="entry name" value="GatB domain, N-terminal subdomain"/>
    <property type="match status" value="1"/>
</dbReference>
<dbReference type="HAMAP" id="MF_00121">
    <property type="entry name" value="GatB"/>
    <property type="match status" value="1"/>
</dbReference>
<dbReference type="InterPro" id="IPR017959">
    <property type="entry name" value="Asn/Gln-tRNA_amidoTrfase_suB/E"/>
</dbReference>
<dbReference type="InterPro" id="IPR006075">
    <property type="entry name" value="Asn/Gln-tRNA_Trfase_suB/E_cat"/>
</dbReference>
<dbReference type="InterPro" id="IPR018027">
    <property type="entry name" value="Asn/Gln_amidotransferase"/>
</dbReference>
<dbReference type="InterPro" id="IPR003789">
    <property type="entry name" value="Asn/Gln_tRNA_amidoTrase-B-like"/>
</dbReference>
<dbReference type="InterPro" id="IPR004413">
    <property type="entry name" value="GatB"/>
</dbReference>
<dbReference type="InterPro" id="IPR042114">
    <property type="entry name" value="GatB_C_1"/>
</dbReference>
<dbReference type="InterPro" id="IPR023168">
    <property type="entry name" value="GatB_Yqey_C_2"/>
</dbReference>
<dbReference type="InterPro" id="IPR017958">
    <property type="entry name" value="Gln-tRNA_amidoTrfase_suB_CS"/>
</dbReference>
<dbReference type="InterPro" id="IPR014746">
    <property type="entry name" value="Gln_synth/guanido_kin_cat_dom"/>
</dbReference>
<dbReference type="NCBIfam" id="TIGR00133">
    <property type="entry name" value="gatB"/>
    <property type="match status" value="1"/>
</dbReference>
<dbReference type="NCBIfam" id="NF004012">
    <property type="entry name" value="PRK05477.1-2"/>
    <property type="match status" value="1"/>
</dbReference>
<dbReference type="NCBIfam" id="NF004014">
    <property type="entry name" value="PRK05477.1-4"/>
    <property type="match status" value="1"/>
</dbReference>
<dbReference type="PANTHER" id="PTHR11659">
    <property type="entry name" value="GLUTAMYL-TRNA GLN AMIDOTRANSFERASE SUBUNIT B MITOCHONDRIAL AND PROKARYOTIC PET112-RELATED"/>
    <property type="match status" value="1"/>
</dbReference>
<dbReference type="PANTHER" id="PTHR11659:SF0">
    <property type="entry name" value="GLUTAMYL-TRNA(GLN) AMIDOTRANSFERASE SUBUNIT B, MITOCHONDRIAL"/>
    <property type="match status" value="1"/>
</dbReference>
<dbReference type="Pfam" id="PF02934">
    <property type="entry name" value="GatB_N"/>
    <property type="match status" value="1"/>
</dbReference>
<dbReference type="Pfam" id="PF02637">
    <property type="entry name" value="GatB_Yqey"/>
    <property type="match status" value="1"/>
</dbReference>
<dbReference type="SMART" id="SM00845">
    <property type="entry name" value="GatB_Yqey"/>
    <property type="match status" value="1"/>
</dbReference>
<dbReference type="SUPFAM" id="SSF89095">
    <property type="entry name" value="GatB/YqeY motif"/>
    <property type="match status" value="1"/>
</dbReference>
<dbReference type="SUPFAM" id="SSF55931">
    <property type="entry name" value="Glutamine synthetase/guanido kinase"/>
    <property type="match status" value="1"/>
</dbReference>
<dbReference type="PROSITE" id="PS01234">
    <property type="entry name" value="GATB"/>
    <property type="match status" value="1"/>
</dbReference>